<proteinExistence type="inferred from homology"/>
<feature type="chain" id="PRO_1000084165" description="Phosphoribosyl-ATP pyrophosphatase">
    <location>
        <begin position="1"/>
        <end position="107"/>
    </location>
</feature>
<organism>
    <name type="scientific">Bacillus cytotoxicus (strain DSM 22905 / CIP 110041 / 391-98 / NVH 391-98)</name>
    <dbReference type="NCBI Taxonomy" id="315749"/>
    <lineage>
        <taxon>Bacteria</taxon>
        <taxon>Bacillati</taxon>
        <taxon>Bacillota</taxon>
        <taxon>Bacilli</taxon>
        <taxon>Bacillales</taxon>
        <taxon>Bacillaceae</taxon>
        <taxon>Bacillus</taxon>
        <taxon>Bacillus cereus group</taxon>
    </lineage>
</organism>
<name>HIS2_BACCN</name>
<comment type="catalytic activity">
    <reaction evidence="1">
        <text>1-(5-phospho-beta-D-ribosyl)-ATP + H2O = 1-(5-phospho-beta-D-ribosyl)-5'-AMP + diphosphate + H(+)</text>
        <dbReference type="Rhea" id="RHEA:22828"/>
        <dbReference type="ChEBI" id="CHEBI:15377"/>
        <dbReference type="ChEBI" id="CHEBI:15378"/>
        <dbReference type="ChEBI" id="CHEBI:33019"/>
        <dbReference type="ChEBI" id="CHEBI:59457"/>
        <dbReference type="ChEBI" id="CHEBI:73183"/>
        <dbReference type="EC" id="3.6.1.31"/>
    </reaction>
</comment>
<comment type="pathway">
    <text evidence="1">Amino-acid biosynthesis; L-histidine biosynthesis; L-histidine from 5-phospho-alpha-D-ribose 1-diphosphate: step 2/9.</text>
</comment>
<comment type="subcellular location">
    <subcellularLocation>
        <location evidence="1">Cytoplasm</location>
    </subcellularLocation>
</comment>
<comment type="similarity">
    <text evidence="1">Belongs to the PRA-PH family.</text>
</comment>
<evidence type="ECO:0000255" key="1">
    <source>
        <dbReference type="HAMAP-Rule" id="MF_01020"/>
    </source>
</evidence>
<dbReference type="EC" id="3.6.1.31" evidence="1"/>
<dbReference type="EMBL" id="CP000764">
    <property type="protein sequence ID" value="ABS21460.1"/>
    <property type="molecule type" value="Genomic_DNA"/>
</dbReference>
<dbReference type="RefSeq" id="WP_011984213.1">
    <property type="nucleotide sequence ID" value="NC_009674.1"/>
</dbReference>
<dbReference type="SMR" id="A7GMV2"/>
<dbReference type="STRING" id="315749.Bcer98_1135"/>
<dbReference type="GeneID" id="33896491"/>
<dbReference type="KEGG" id="bcy:Bcer98_1135"/>
<dbReference type="eggNOG" id="COG0140">
    <property type="taxonomic scope" value="Bacteria"/>
</dbReference>
<dbReference type="HOGENOM" id="CLU_123337_0_0_9"/>
<dbReference type="OrthoDB" id="9795769at2"/>
<dbReference type="UniPathway" id="UPA00031">
    <property type="reaction ID" value="UER00007"/>
</dbReference>
<dbReference type="Proteomes" id="UP000002300">
    <property type="component" value="Chromosome"/>
</dbReference>
<dbReference type="GO" id="GO:0005737">
    <property type="term" value="C:cytoplasm"/>
    <property type="evidence" value="ECO:0007669"/>
    <property type="project" value="UniProtKB-SubCell"/>
</dbReference>
<dbReference type="GO" id="GO:0005524">
    <property type="term" value="F:ATP binding"/>
    <property type="evidence" value="ECO:0007669"/>
    <property type="project" value="UniProtKB-KW"/>
</dbReference>
<dbReference type="GO" id="GO:0004636">
    <property type="term" value="F:phosphoribosyl-ATP diphosphatase activity"/>
    <property type="evidence" value="ECO:0007669"/>
    <property type="project" value="UniProtKB-UniRule"/>
</dbReference>
<dbReference type="GO" id="GO:0000105">
    <property type="term" value="P:L-histidine biosynthetic process"/>
    <property type="evidence" value="ECO:0007669"/>
    <property type="project" value="UniProtKB-UniRule"/>
</dbReference>
<dbReference type="CDD" id="cd11534">
    <property type="entry name" value="NTP-PPase_HisIE_like"/>
    <property type="match status" value="1"/>
</dbReference>
<dbReference type="FunFam" id="1.10.287.1080:FF:000002">
    <property type="entry name" value="Histidine biosynthesis bifunctional protein HisIE"/>
    <property type="match status" value="1"/>
</dbReference>
<dbReference type="Gene3D" id="1.10.287.1080">
    <property type="entry name" value="MazG-like"/>
    <property type="match status" value="1"/>
</dbReference>
<dbReference type="HAMAP" id="MF_01020">
    <property type="entry name" value="HisE"/>
    <property type="match status" value="1"/>
</dbReference>
<dbReference type="InterPro" id="IPR008179">
    <property type="entry name" value="HisE"/>
</dbReference>
<dbReference type="InterPro" id="IPR021130">
    <property type="entry name" value="PRib-ATP_PPHydrolase-like"/>
</dbReference>
<dbReference type="NCBIfam" id="TIGR03188">
    <property type="entry name" value="histidine_hisI"/>
    <property type="match status" value="1"/>
</dbReference>
<dbReference type="NCBIfam" id="NF001611">
    <property type="entry name" value="PRK00400.1-3"/>
    <property type="match status" value="1"/>
</dbReference>
<dbReference type="PANTHER" id="PTHR42945">
    <property type="entry name" value="HISTIDINE BIOSYNTHESIS BIFUNCTIONAL PROTEIN"/>
    <property type="match status" value="1"/>
</dbReference>
<dbReference type="PANTHER" id="PTHR42945:SF9">
    <property type="entry name" value="HISTIDINE BIOSYNTHESIS BIFUNCTIONAL PROTEIN HISIE"/>
    <property type="match status" value="1"/>
</dbReference>
<dbReference type="Pfam" id="PF01503">
    <property type="entry name" value="PRA-PH"/>
    <property type="match status" value="1"/>
</dbReference>
<dbReference type="SUPFAM" id="SSF101386">
    <property type="entry name" value="all-alpha NTP pyrophosphatases"/>
    <property type="match status" value="1"/>
</dbReference>
<gene>
    <name evidence="1" type="primary">hisE</name>
    <name type="ordered locus">Bcer98_1135</name>
</gene>
<sequence>MEKVLKSLFETIENRKQSPLQGSYTNYLLTKGADKILKKIGEECTEVVIAAKNDNKEEIVKEMVDVLYHCFVLLVAKNISLEEIEKEVRERTGKISKTEERKEIDTL</sequence>
<reference key="1">
    <citation type="journal article" date="2008" name="Chem. Biol. Interact.">
        <title>Extending the Bacillus cereus group genomics to putative food-borne pathogens of different toxicity.</title>
        <authorList>
            <person name="Lapidus A."/>
            <person name="Goltsman E."/>
            <person name="Auger S."/>
            <person name="Galleron N."/>
            <person name="Segurens B."/>
            <person name="Dossat C."/>
            <person name="Land M.L."/>
            <person name="Broussolle V."/>
            <person name="Brillard J."/>
            <person name="Guinebretiere M.-H."/>
            <person name="Sanchis V."/>
            <person name="Nguen-the C."/>
            <person name="Lereclus D."/>
            <person name="Richardson P."/>
            <person name="Wincker P."/>
            <person name="Weissenbach J."/>
            <person name="Ehrlich S.D."/>
            <person name="Sorokin A."/>
        </authorList>
    </citation>
    <scope>NUCLEOTIDE SEQUENCE [LARGE SCALE GENOMIC DNA]</scope>
    <source>
        <strain>DSM 22905 / CIP 110041 / 391-98 / NVH 391-98</strain>
    </source>
</reference>
<keyword id="KW-0028">Amino-acid biosynthesis</keyword>
<keyword id="KW-0067">ATP-binding</keyword>
<keyword id="KW-0963">Cytoplasm</keyword>
<keyword id="KW-0368">Histidine biosynthesis</keyword>
<keyword id="KW-0378">Hydrolase</keyword>
<keyword id="KW-0547">Nucleotide-binding</keyword>
<accession>A7GMV2</accession>
<protein>
    <recommendedName>
        <fullName evidence="1">Phosphoribosyl-ATP pyrophosphatase</fullName>
        <shortName evidence="1">PRA-PH</shortName>
        <ecNumber evidence="1">3.6.1.31</ecNumber>
    </recommendedName>
</protein>